<organism>
    <name type="scientific">Echinococcus granulosus</name>
    <name type="common">Hydatid tapeworm</name>
    <dbReference type="NCBI Taxonomy" id="6210"/>
    <lineage>
        <taxon>Eukaryota</taxon>
        <taxon>Metazoa</taxon>
        <taxon>Spiralia</taxon>
        <taxon>Lophotrochozoa</taxon>
        <taxon>Platyhelminthes</taxon>
        <taxon>Cestoda</taxon>
        <taxon>Eucestoda</taxon>
        <taxon>Cyclophyllidea</taxon>
        <taxon>Taeniidae</taxon>
        <taxon>Echinococcus</taxon>
        <taxon>Echinococcus granulosus group</taxon>
    </lineage>
</organism>
<evidence type="ECO:0000250" key="1">
    <source>
        <dbReference type="UniProtKB" id="G3I8R9"/>
    </source>
</evidence>
<evidence type="ECO:0000250" key="2">
    <source>
        <dbReference type="UniProtKB" id="P11021"/>
    </source>
</evidence>
<evidence type="ECO:0000250" key="3">
    <source>
        <dbReference type="UniProtKB" id="P20029"/>
    </source>
</evidence>
<evidence type="ECO:0000255" key="4"/>
<evidence type="ECO:0000303" key="5">
    <source>
    </source>
</evidence>
<evidence type="ECO:0000305" key="6"/>
<accession>Q24798</accession>
<gene>
    <name evidence="5" type="primary">GRP78</name>
</gene>
<sequence length="651" mass="71921">MGLSTYVGIFLLCILTLSRCKSGKEEYGTVIGIDLGTTYSCVGVFKNGRVEIIANDQGNRITPSYVAFSGDGERLIGDAAKNQLTSNPKNTLFDAKRLIGRDYHDKDVQGDIKRYPFKVINKNNKPYMKVQVGSEEKGFAPEEVSAMVLSKMKEIAEAYLGTEVTHAVVTVPAYFNDAQRQATKDAGAIAGLTVLRIINEPTAAAIAYGLEKKDTEKNILVFDLGGGTFDVSLLTIDNGVFEVVATSGDTHLGGEDFDQRLIDYFVKLYKKKEGKDITKDDRAVQKLRREVEKAKRTLSTEHSTMIEIDNLFEGKDFSEPLTRARFEELNNDLFRSTLKPVMKVMEDSGLKKEDIDDIVLVGGSTRIPKIQQLVKEFFNGKEPIRGINPDEAVAYGAAVQAGVISGVEDTGDIVLLDVCPLTMGIETVGGVMTKLIPRNTVIPTKKSQIFSTAADNQPTVTIQVFEGERPMTKDNHFLGKFDLTGIPPAPRGLPQIEVTFEIDVNGILRVSAEDKGTGKKSNIVINKETNRITPEEIERMIQDAEKFSDQDKQVKERVEVRNDLESLAYSIKNQVKDKEKMGGKLSDDEIKTIEDAADEAIKWMENNPQAETSDYKKQKANLESVVQPIVSKLYEGAAPPPPTESTPKEEL</sequence>
<name>BIP_ECHGR</name>
<dbReference type="EC" id="3.6.4.10" evidence="2"/>
<dbReference type="EMBL" id="M63605">
    <property type="protein sequence ID" value="AAC37259.1"/>
    <property type="molecule type" value="mRNA"/>
</dbReference>
<dbReference type="SMR" id="Q24798"/>
<dbReference type="OrthoDB" id="2401965at2759"/>
<dbReference type="Proteomes" id="UP000492820">
    <property type="component" value="Unplaced"/>
</dbReference>
<dbReference type="GO" id="GO:0005788">
    <property type="term" value="C:endoplasmic reticulum lumen"/>
    <property type="evidence" value="ECO:0007669"/>
    <property type="project" value="UniProtKB-SubCell"/>
</dbReference>
<dbReference type="GO" id="GO:0005524">
    <property type="term" value="F:ATP binding"/>
    <property type="evidence" value="ECO:0007669"/>
    <property type="project" value="UniProtKB-KW"/>
</dbReference>
<dbReference type="GO" id="GO:0016887">
    <property type="term" value="F:ATP hydrolysis activity"/>
    <property type="evidence" value="ECO:0007669"/>
    <property type="project" value="RHEA"/>
</dbReference>
<dbReference type="GO" id="GO:0140662">
    <property type="term" value="F:ATP-dependent protein folding chaperone"/>
    <property type="evidence" value="ECO:0007669"/>
    <property type="project" value="InterPro"/>
</dbReference>
<dbReference type="CDD" id="cd10241">
    <property type="entry name" value="ASKHA_NBD_HSP70_BiP"/>
    <property type="match status" value="1"/>
</dbReference>
<dbReference type="FunFam" id="2.60.34.10:FF:000014">
    <property type="entry name" value="Chaperone protein DnaK HSP70"/>
    <property type="match status" value="1"/>
</dbReference>
<dbReference type="FunFam" id="3.30.420.40:FF:000720">
    <property type="entry name" value="Endoplasmic reticulum chaperone BiP"/>
    <property type="match status" value="1"/>
</dbReference>
<dbReference type="FunFam" id="3.90.640.10:FF:000153">
    <property type="entry name" value="Endoplasmic reticulum chaperone BiP"/>
    <property type="match status" value="1"/>
</dbReference>
<dbReference type="FunFam" id="3.30.30.30:FF:000001">
    <property type="entry name" value="heat shock 70 kDa protein-like"/>
    <property type="match status" value="1"/>
</dbReference>
<dbReference type="Gene3D" id="1.20.1270.10">
    <property type="match status" value="1"/>
</dbReference>
<dbReference type="Gene3D" id="3.30.420.40">
    <property type="match status" value="2"/>
</dbReference>
<dbReference type="Gene3D" id="3.90.640.10">
    <property type="entry name" value="Actin, Chain A, domain 4"/>
    <property type="match status" value="1"/>
</dbReference>
<dbReference type="Gene3D" id="2.60.34.10">
    <property type="entry name" value="Substrate Binding Domain Of DNAk, Chain A, domain 1"/>
    <property type="match status" value="1"/>
</dbReference>
<dbReference type="InterPro" id="IPR043129">
    <property type="entry name" value="ATPase_NBD"/>
</dbReference>
<dbReference type="InterPro" id="IPR042050">
    <property type="entry name" value="BIP_NBD"/>
</dbReference>
<dbReference type="InterPro" id="IPR018181">
    <property type="entry name" value="Heat_shock_70_CS"/>
</dbReference>
<dbReference type="InterPro" id="IPR029048">
    <property type="entry name" value="HSP70_C_sf"/>
</dbReference>
<dbReference type="InterPro" id="IPR029047">
    <property type="entry name" value="HSP70_peptide-bd_sf"/>
</dbReference>
<dbReference type="InterPro" id="IPR013126">
    <property type="entry name" value="Hsp_70_fam"/>
</dbReference>
<dbReference type="NCBIfam" id="NF001413">
    <property type="entry name" value="PRK00290.1"/>
    <property type="match status" value="1"/>
</dbReference>
<dbReference type="PANTHER" id="PTHR19375">
    <property type="entry name" value="HEAT SHOCK PROTEIN 70KDA"/>
    <property type="match status" value="1"/>
</dbReference>
<dbReference type="Pfam" id="PF00012">
    <property type="entry name" value="HSP70"/>
    <property type="match status" value="1"/>
</dbReference>
<dbReference type="PRINTS" id="PR00301">
    <property type="entry name" value="HEATSHOCK70"/>
</dbReference>
<dbReference type="SUPFAM" id="SSF53067">
    <property type="entry name" value="Actin-like ATPase domain"/>
    <property type="match status" value="2"/>
</dbReference>
<dbReference type="SUPFAM" id="SSF100934">
    <property type="entry name" value="Heat shock protein 70kD (HSP70), C-terminal subdomain"/>
    <property type="match status" value="1"/>
</dbReference>
<dbReference type="SUPFAM" id="SSF100920">
    <property type="entry name" value="Heat shock protein 70kD (HSP70), peptide-binding domain"/>
    <property type="match status" value="1"/>
</dbReference>
<dbReference type="PROSITE" id="PS00014">
    <property type="entry name" value="ER_TARGET"/>
    <property type="match status" value="1"/>
</dbReference>
<dbReference type="PROSITE" id="PS00297">
    <property type="entry name" value="HSP70_1"/>
    <property type="match status" value="1"/>
</dbReference>
<dbReference type="PROSITE" id="PS00329">
    <property type="entry name" value="HSP70_2"/>
    <property type="match status" value="1"/>
</dbReference>
<dbReference type="PROSITE" id="PS01036">
    <property type="entry name" value="HSP70_3"/>
    <property type="match status" value="1"/>
</dbReference>
<feature type="signal peptide" evidence="4">
    <location>
        <begin position="1"/>
        <end position="20"/>
    </location>
</feature>
<feature type="chain" id="PRO_0000013573" description="Endoplasmic reticulum chaperone BiP">
    <location>
        <begin position="21"/>
        <end position="651"/>
    </location>
</feature>
<feature type="region of interest" description="Nucleotide-binding (NBD)" evidence="2">
    <location>
        <begin position="125"/>
        <end position="279"/>
    </location>
</feature>
<feature type="region of interest" description="Substrate-binding (SBD)" evidence="2">
    <location>
        <begin position="399"/>
        <end position="499"/>
    </location>
</feature>
<feature type="short sequence motif" description="Prevents secretion from ER">
    <location>
        <begin position="648"/>
        <end position="651"/>
    </location>
</feature>
<feature type="binding site" evidence="2">
    <location>
        <begin position="36"/>
        <end position="39"/>
    </location>
    <ligand>
        <name>ATP</name>
        <dbReference type="ChEBI" id="CHEBI:30616"/>
    </ligand>
</feature>
<feature type="binding site" evidence="2">
    <location>
        <position position="96"/>
    </location>
    <ligand>
        <name>ATP</name>
        <dbReference type="ChEBI" id="CHEBI:30616"/>
    </ligand>
</feature>
<feature type="binding site" evidence="2">
    <location>
        <begin position="226"/>
        <end position="228"/>
    </location>
    <ligand>
        <name>ATP</name>
        <dbReference type="ChEBI" id="CHEBI:30616"/>
    </ligand>
</feature>
<feature type="binding site" evidence="2">
    <location>
        <begin position="292"/>
        <end position="299"/>
    </location>
    <ligand>
        <name>ATP</name>
        <dbReference type="ChEBI" id="CHEBI:30616"/>
    </ligand>
</feature>
<feature type="binding site" evidence="2">
    <location>
        <begin position="363"/>
        <end position="366"/>
    </location>
    <ligand>
        <name>ATP</name>
        <dbReference type="ChEBI" id="CHEBI:30616"/>
    </ligand>
</feature>
<protein>
    <recommendedName>
        <fullName evidence="2">Endoplasmic reticulum chaperone BiP</fullName>
        <ecNumber evidence="2">3.6.4.10</ecNumber>
    </recommendedName>
    <alternativeName>
        <fullName evidence="5">78 kDa glucose-regulated protein homolog</fullName>
        <shortName evidence="5">GRP-78 homolog</shortName>
    </alternativeName>
    <alternativeName>
        <fullName evidence="2">Binding-immunoglobulin protein homolog</fullName>
        <shortName evidence="2">BiP</shortName>
    </alternativeName>
</protein>
<reference key="1">
    <citation type="journal article" date="1995" name="Mol. Biochem. Parasitol.">
        <title>Molecular cloning and characterization of an Echinococcus multilocularis and Echinococcus granulosus stress protein homologous to the mammalian 78 kDa glucose regulated protein.</title>
        <authorList>
            <person name="Muhlschlegel F."/>
            <person name="Frosch P."/>
            <person name="Castro A."/>
            <person name="Apfel H."/>
            <person name="Muller A."/>
            <person name="Frosch M."/>
        </authorList>
    </citation>
    <scope>NUCLEOTIDE SEQUENCE [MRNA]</scope>
</reference>
<proteinExistence type="evidence at transcript level"/>
<comment type="function">
    <text evidence="1 2 3">Endoplasmic reticulum chaperone that plays a key role in protein folding and quality control in the endoplasmic reticulum lumen. Involved in the correct folding of proteins and degradation of misfolded proteins (By similarity). Acts as a key repressor of the unfolded protein response (UPR) (By similarity).</text>
</comment>
<comment type="catalytic activity">
    <reaction evidence="2">
        <text>ATP + H2O = ADP + phosphate + H(+)</text>
        <dbReference type="Rhea" id="RHEA:13065"/>
        <dbReference type="ChEBI" id="CHEBI:15377"/>
        <dbReference type="ChEBI" id="CHEBI:15378"/>
        <dbReference type="ChEBI" id="CHEBI:30616"/>
        <dbReference type="ChEBI" id="CHEBI:43474"/>
        <dbReference type="ChEBI" id="CHEBI:456216"/>
        <dbReference type="EC" id="3.6.4.10"/>
    </reaction>
</comment>
<comment type="activity regulation">
    <text evidence="2">The chaperone activity is regulated by ATP-induced allosteric coupling of the nucleotide-binding (NBD) and substrate-binding (SBD) domains. In the ADP-bound and nucleotide-free (apo) states, the two domains have little interaction. In contrast, in the ATP-bound state the two domains are tightly coupled, which results in drastically accelerated kinetics in both binding and release of polypeptide substrates. J domain-containing co-chaperones stimulate the ATPase activity and are required for efficient substrate recognition.</text>
</comment>
<comment type="subcellular location">
    <subcellularLocation>
        <location evidence="2">Endoplasmic reticulum lumen</location>
    </subcellularLocation>
</comment>
<comment type="similarity">
    <text evidence="6">Belongs to the heat shock protein 70 family.</text>
</comment>
<keyword id="KW-0067">ATP-binding</keyword>
<keyword id="KW-0143">Chaperone</keyword>
<keyword id="KW-0256">Endoplasmic reticulum</keyword>
<keyword id="KW-0378">Hydrolase</keyword>
<keyword id="KW-0547">Nucleotide-binding</keyword>
<keyword id="KW-0732">Signal</keyword>